<comment type="function">
    <text evidence="2 3">A major component of the extracellular matrix of non-articular cartilage (By similarity). Binds to type 2 collagens and forms long concatenated protein networks as part of the extracellular matrix (By similarity). Required for the network-like organization and bundling of collagen fibrils surrounding chondrocytes in the zones of maturation and hypertrophy (By similarity). Required for mechanotransduction and adaption to mechanical loading in cartilage chondrocytes, resulting in an increase in expression of the extracellular matrix components ACAN and COL2A1 (By similarity). Acts as a moderator of angiogenesis in response to injury (By similarity).</text>
</comment>
<comment type="subunit">
    <text evidence="1 2 7 8">Homotrimer (By similarity). Part of a complex composed of MATN1 (via VWFA1 domain), type 2 collagens and type 6 collagens (PubMed:20729554). Forms a complex (via covalent bonds) with ACAN; the interaction increases in abundance with increasing age of the organism via an increase in occupancy of MATN1 binding sites (By similarity). Interacts with COMP (PubMed:15075323).</text>
</comment>
<comment type="interaction">
    <interactant intactId="EBI-20828128">
        <id>P21941</id>
    </interactant>
    <interactant intactId="EBI-5281315">
        <id>P02459</id>
        <label>COL2A1</label>
    </interactant>
    <organismsDiffer>true</organismsDiffer>
    <experiments>3</experiments>
</comment>
<comment type="subcellular location">
    <subcellularLocation>
        <location evidence="2">Secreted</location>
        <location evidence="2">Extracellular space</location>
        <location evidence="2">Extracellular matrix</location>
    </subcellularLocation>
</comment>
<comment type="PTM">
    <text evidence="8">N-glycosylated; reduces binding affinity for type 2 collagens.</text>
</comment>
<organism>
    <name type="scientific">Homo sapiens</name>
    <name type="common">Human</name>
    <dbReference type="NCBI Taxonomy" id="9606"/>
    <lineage>
        <taxon>Eukaryota</taxon>
        <taxon>Metazoa</taxon>
        <taxon>Chordata</taxon>
        <taxon>Craniata</taxon>
        <taxon>Vertebrata</taxon>
        <taxon>Euteleostomi</taxon>
        <taxon>Mammalia</taxon>
        <taxon>Eutheria</taxon>
        <taxon>Euarchontoglires</taxon>
        <taxon>Primates</taxon>
        <taxon>Haplorrhini</taxon>
        <taxon>Catarrhini</taxon>
        <taxon>Hominidae</taxon>
        <taxon>Homo</taxon>
    </lineage>
</organism>
<feature type="signal peptide">
    <location>
        <begin position="1"/>
        <end position="22"/>
    </location>
</feature>
<feature type="chain" id="PRO_0000007495" description="Matrilin-1">
    <location>
        <begin position="23"/>
        <end position="496"/>
    </location>
</feature>
<feature type="domain" description="VWFA 1" evidence="6">
    <location>
        <begin position="23"/>
        <end position="222"/>
    </location>
</feature>
<feature type="domain" description="EGF-like" evidence="5">
    <location>
        <begin position="223"/>
        <end position="263"/>
    </location>
</feature>
<feature type="domain" description="VWFA 2" evidence="6">
    <location>
        <begin position="264"/>
        <end position="453"/>
    </location>
</feature>
<feature type="coiled-coil region" evidence="4">
    <location>
        <begin position="467"/>
        <end position="495"/>
    </location>
</feature>
<feature type="glycosylation site" description="N-linked (GlcNAc...) asparagine" evidence="8">
    <location>
        <position position="76"/>
    </location>
</feature>
<feature type="glycosylation site" description="N-linked (GalNAc...) asparagine" evidence="8">
    <location>
        <position position="344"/>
    </location>
</feature>
<feature type="disulfide bond" evidence="5">
    <location>
        <begin position="227"/>
        <end position="238"/>
    </location>
</feature>
<feature type="disulfide bond" evidence="5">
    <location>
        <begin position="234"/>
        <end position="247"/>
    </location>
</feature>
<feature type="disulfide bond" evidence="5">
    <location>
        <begin position="249"/>
        <end position="262"/>
    </location>
</feature>
<feature type="mutagenesis site" description="Abolishes N-glycosylation; no effect on protein secretion and increases interaction with type 2 collagens." evidence="8">
    <original>N</original>
    <variation>A</variation>
    <location>
        <position position="76"/>
    </location>
</feature>
<feature type="mutagenesis site" description="Abolishes N-glycosylation; no effect on protein secretion and increases interaction with type 2 collagens." evidence="8">
    <original>N</original>
    <variation>A</variation>
    <location>
        <position position="344"/>
    </location>
</feature>
<feature type="sequence conflict" description="In Ref. 1; AAA63904." evidence="10" ref="1">
    <original>F</original>
    <variation>L</variation>
    <location>
        <position position="291"/>
    </location>
</feature>
<accession>P21941</accession>
<accession>B2R7E3</accession>
<accession>Q5TBB9</accession>
<sequence length="496" mass="53701">MRVLSGTSLMLCSLLLLLQALCSPGLAPQSRGHLCRTRPTDLVFVVDSSRSVRPVEFEKVKVFLSQVIESLDVGPNATRVGMVNYASTVKQEFSLRAHVSKAALLQAVRRIQPLSTGTMTGLAIQFAITKAFGDAEGGRSRSPDISKVVIVVTDGRPQDSVQDVSARARASGVELFAIGVGSVDKATLRQIASEPQDEHVDYVESYSVIEKLSRKFQEAFCVVSDLCATGDHDCEQVCISSPGSYTCACHEGFTLNSDGKTCNVCSGGGGSSATDLVFLIDGSKSVRPENFELVKKFISQIVDTLDVSDKLAQVGLVQYSSSVRQEFPLGRFHTKKDIKAAVRNMSYMEKGTMTGAALKYLIDNSFTVSSGARPGAQKVGIVFTDGRSQDYINDAAKKAKDLGFKMFAVGVGNAVEDELREIASEPVAEHYFYTADFKTINQIGKKLQKKICVEEDPCACESLVKFQAKVEGLLQALTRKLEAVSKRLAILENTVV</sequence>
<reference key="1">
    <citation type="journal article" date="1990" name="J. Biol. Chem.">
        <title>Structure and chromosomal location of the human gene encoding cartilage matrix protein.</title>
        <authorList>
            <person name="Jenkins R.N."/>
            <person name="Osborne-Lawrence S.L."/>
            <person name="Sinclair A.K."/>
            <person name="Eddy R.L. Jr."/>
            <person name="Byers M.G."/>
            <person name="Shows T.B."/>
            <person name="Duby A.D."/>
        </authorList>
    </citation>
    <scope>NUCLEOTIDE SEQUENCE [GENOMIC DNA]</scope>
    <scope>NUCLEOTIDE SEQUENCE [MRNA] OF 157-496</scope>
</reference>
<reference key="2">
    <citation type="journal article" date="2004" name="Nat. Genet.">
        <title>Complete sequencing and characterization of 21,243 full-length human cDNAs.</title>
        <authorList>
            <person name="Ota T."/>
            <person name="Suzuki Y."/>
            <person name="Nishikawa T."/>
            <person name="Otsuki T."/>
            <person name="Sugiyama T."/>
            <person name="Irie R."/>
            <person name="Wakamatsu A."/>
            <person name="Hayashi K."/>
            <person name="Sato H."/>
            <person name="Nagai K."/>
            <person name="Kimura K."/>
            <person name="Makita H."/>
            <person name="Sekine M."/>
            <person name="Obayashi M."/>
            <person name="Nishi T."/>
            <person name="Shibahara T."/>
            <person name="Tanaka T."/>
            <person name="Ishii S."/>
            <person name="Yamamoto J."/>
            <person name="Saito K."/>
            <person name="Kawai Y."/>
            <person name="Isono Y."/>
            <person name="Nakamura Y."/>
            <person name="Nagahari K."/>
            <person name="Murakami K."/>
            <person name="Yasuda T."/>
            <person name="Iwayanagi T."/>
            <person name="Wagatsuma M."/>
            <person name="Shiratori A."/>
            <person name="Sudo H."/>
            <person name="Hosoiri T."/>
            <person name="Kaku Y."/>
            <person name="Kodaira H."/>
            <person name="Kondo H."/>
            <person name="Sugawara M."/>
            <person name="Takahashi M."/>
            <person name="Kanda K."/>
            <person name="Yokoi T."/>
            <person name="Furuya T."/>
            <person name="Kikkawa E."/>
            <person name="Omura Y."/>
            <person name="Abe K."/>
            <person name="Kamihara K."/>
            <person name="Katsuta N."/>
            <person name="Sato K."/>
            <person name="Tanikawa M."/>
            <person name="Yamazaki M."/>
            <person name="Ninomiya K."/>
            <person name="Ishibashi T."/>
            <person name="Yamashita H."/>
            <person name="Murakawa K."/>
            <person name="Fujimori K."/>
            <person name="Tanai H."/>
            <person name="Kimata M."/>
            <person name="Watanabe M."/>
            <person name="Hiraoka S."/>
            <person name="Chiba Y."/>
            <person name="Ishida S."/>
            <person name="Ono Y."/>
            <person name="Takiguchi S."/>
            <person name="Watanabe S."/>
            <person name="Yosida M."/>
            <person name="Hotuta T."/>
            <person name="Kusano J."/>
            <person name="Kanehori K."/>
            <person name="Takahashi-Fujii A."/>
            <person name="Hara H."/>
            <person name="Tanase T.-O."/>
            <person name="Nomura Y."/>
            <person name="Togiya S."/>
            <person name="Komai F."/>
            <person name="Hara R."/>
            <person name="Takeuchi K."/>
            <person name="Arita M."/>
            <person name="Imose N."/>
            <person name="Musashino K."/>
            <person name="Yuuki H."/>
            <person name="Oshima A."/>
            <person name="Sasaki N."/>
            <person name="Aotsuka S."/>
            <person name="Yoshikawa Y."/>
            <person name="Matsunawa H."/>
            <person name="Ichihara T."/>
            <person name="Shiohata N."/>
            <person name="Sano S."/>
            <person name="Moriya S."/>
            <person name="Momiyama H."/>
            <person name="Satoh N."/>
            <person name="Takami S."/>
            <person name="Terashima Y."/>
            <person name="Suzuki O."/>
            <person name="Nakagawa S."/>
            <person name="Senoh A."/>
            <person name="Mizoguchi H."/>
            <person name="Goto Y."/>
            <person name="Shimizu F."/>
            <person name="Wakebe H."/>
            <person name="Hishigaki H."/>
            <person name="Watanabe T."/>
            <person name="Sugiyama A."/>
            <person name="Takemoto M."/>
            <person name="Kawakami B."/>
            <person name="Yamazaki M."/>
            <person name="Watanabe K."/>
            <person name="Kumagai A."/>
            <person name="Itakura S."/>
            <person name="Fukuzumi Y."/>
            <person name="Fujimori Y."/>
            <person name="Komiyama M."/>
            <person name="Tashiro H."/>
            <person name="Tanigami A."/>
            <person name="Fujiwara T."/>
            <person name="Ono T."/>
            <person name="Yamada K."/>
            <person name="Fujii Y."/>
            <person name="Ozaki K."/>
            <person name="Hirao M."/>
            <person name="Ohmori Y."/>
            <person name="Kawabata A."/>
            <person name="Hikiji T."/>
            <person name="Kobatake N."/>
            <person name="Inagaki H."/>
            <person name="Ikema Y."/>
            <person name="Okamoto S."/>
            <person name="Okitani R."/>
            <person name="Kawakami T."/>
            <person name="Noguchi S."/>
            <person name="Itoh T."/>
            <person name="Shigeta K."/>
            <person name="Senba T."/>
            <person name="Matsumura K."/>
            <person name="Nakajima Y."/>
            <person name="Mizuno T."/>
            <person name="Morinaga M."/>
            <person name="Sasaki M."/>
            <person name="Togashi T."/>
            <person name="Oyama M."/>
            <person name="Hata H."/>
            <person name="Watanabe M."/>
            <person name="Komatsu T."/>
            <person name="Mizushima-Sugano J."/>
            <person name="Satoh T."/>
            <person name="Shirai Y."/>
            <person name="Takahashi Y."/>
            <person name="Nakagawa K."/>
            <person name="Okumura K."/>
            <person name="Nagase T."/>
            <person name="Nomura N."/>
            <person name="Kikuchi H."/>
            <person name="Masuho Y."/>
            <person name="Yamashita R."/>
            <person name="Nakai K."/>
            <person name="Yada T."/>
            <person name="Nakamura Y."/>
            <person name="Ohara O."/>
            <person name="Isogai T."/>
            <person name="Sugano S."/>
        </authorList>
    </citation>
    <scope>NUCLEOTIDE SEQUENCE [LARGE SCALE MRNA]</scope>
    <source>
        <tissue>Trachea</tissue>
    </source>
</reference>
<reference key="3">
    <citation type="journal article" date="2006" name="Nature">
        <title>The DNA sequence and biological annotation of human chromosome 1.</title>
        <authorList>
            <person name="Gregory S.G."/>
            <person name="Barlow K.F."/>
            <person name="McLay K.E."/>
            <person name="Kaul R."/>
            <person name="Swarbreck D."/>
            <person name="Dunham A."/>
            <person name="Scott C.E."/>
            <person name="Howe K.L."/>
            <person name="Woodfine K."/>
            <person name="Spencer C.C.A."/>
            <person name="Jones M.C."/>
            <person name="Gillson C."/>
            <person name="Searle S."/>
            <person name="Zhou Y."/>
            <person name="Kokocinski F."/>
            <person name="McDonald L."/>
            <person name="Evans R."/>
            <person name="Phillips K."/>
            <person name="Atkinson A."/>
            <person name="Cooper R."/>
            <person name="Jones C."/>
            <person name="Hall R.E."/>
            <person name="Andrews T.D."/>
            <person name="Lloyd C."/>
            <person name="Ainscough R."/>
            <person name="Almeida J.P."/>
            <person name="Ambrose K.D."/>
            <person name="Anderson F."/>
            <person name="Andrew R.W."/>
            <person name="Ashwell R.I.S."/>
            <person name="Aubin K."/>
            <person name="Babbage A.K."/>
            <person name="Bagguley C.L."/>
            <person name="Bailey J."/>
            <person name="Beasley H."/>
            <person name="Bethel G."/>
            <person name="Bird C.P."/>
            <person name="Bray-Allen S."/>
            <person name="Brown J.Y."/>
            <person name="Brown A.J."/>
            <person name="Buckley D."/>
            <person name="Burton J."/>
            <person name="Bye J."/>
            <person name="Carder C."/>
            <person name="Chapman J.C."/>
            <person name="Clark S.Y."/>
            <person name="Clarke G."/>
            <person name="Clee C."/>
            <person name="Cobley V."/>
            <person name="Collier R.E."/>
            <person name="Corby N."/>
            <person name="Coville G.J."/>
            <person name="Davies J."/>
            <person name="Deadman R."/>
            <person name="Dunn M."/>
            <person name="Earthrowl M."/>
            <person name="Ellington A.G."/>
            <person name="Errington H."/>
            <person name="Frankish A."/>
            <person name="Frankland J."/>
            <person name="French L."/>
            <person name="Garner P."/>
            <person name="Garnett J."/>
            <person name="Gay L."/>
            <person name="Ghori M.R.J."/>
            <person name="Gibson R."/>
            <person name="Gilby L.M."/>
            <person name="Gillett W."/>
            <person name="Glithero R.J."/>
            <person name="Grafham D.V."/>
            <person name="Griffiths C."/>
            <person name="Griffiths-Jones S."/>
            <person name="Grocock R."/>
            <person name="Hammond S."/>
            <person name="Harrison E.S.I."/>
            <person name="Hart E."/>
            <person name="Haugen E."/>
            <person name="Heath P.D."/>
            <person name="Holmes S."/>
            <person name="Holt K."/>
            <person name="Howden P.J."/>
            <person name="Hunt A.R."/>
            <person name="Hunt S.E."/>
            <person name="Hunter G."/>
            <person name="Isherwood J."/>
            <person name="James R."/>
            <person name="Johnson C."/>
            <person name="Johnson D."/>
            <person name="Joy A."/>
            <person name="Kay M."/>
            <person name="Kershaw J.K."/>
            <person name="Kibukawa M."/>
            <person name="Kimberley A.M."/>
            <person name="King A."/>
            <person name="Knights A.J."/>
            <person name="Lad H."/>
            <person name="Laird G."/>
            <person name="Lawlor S."/>
            <person name="Leongamornlert D.A."/>
            <person name="Lloyd D.M."/>
            <person name="Loveland J."/>
            <person name="Lovell J."/>
            <person name="Lush M.J."/>
            <person name="Lyne R."/>
            <person name="Martin S."/>
            <person name="Mashreghi-Mohammadi M."/>
            <person name="Matthews L."/>
            <person name="Matthews N.S.W."/>
            <person name="McLaren S."/>
            <person name="Milne S."/>
            <person name="Mistry S."/>
            <person name="Moore M.J.F."/>
            <person name="Nickerson T."/>
            <person name="O'Dell C.N."/>
            <person name="Oliver K."/>
            <person name="Palmeiri A."/>
            <person name="Palmer S.A."/>
            <person name="Parker A."/>
            <person name="Patel D."/>
            <person name="Pearce A.V."/>
            <person name="Peck A.I."/>
            <person name="Pelan S."/>
            <person name="Phelps K."/>
            <person name="Phillimore B.J."/>
            <person name="Plumb R."/>
            <person name="Rajan J."/>
            <person name="Raymond C."/>
            <person name="Rouse G."/>
            <person name="Saenphimmachak C."/>
            <person name="Sehra H.K."/>
            <person name="Sheridan E."/>
            <person name="Shownkeen R."/>
            <person name="Sims S."/>
            <person name="Skuce C.D."/>
            <person name="Smith M."/>
            <person name="Steward C."/>
            <person name="Subramanian S."/>
            <person name="Sycamore N."/>
            <person name="Tracey A."/>
            <person name="Tromans A."/>
            <person name="Van Helmond Z."/>
            <person name="Wall M."/>
            <person name="Wallis J.M."/>
            <person name="White S."/>
            <person name="Whitehead S.L."/>
            <person name="Wilkinson J.E."/>
            <person name="Willey D.L."/>
            <person name="Williams H."/>
            <person name="Wilming L."/>
            <person name="Wray P.W."/>
            <person name="Wu Z."/>
            <person name="Coulson A."/>
            <person name="Vaudin M."/>
            <person name="Sulston J.E."/>
            <person name="Durbin R.M."/>
            <person name="Hubbard T."/>
            <person name="Wooster R."/>
            <person name="Dunham I."/>
            <person name="Carter N.P."/>
            <person name="McVean G."/>
            <person name="Ross M.T."/>
            <person name="Harrow J."/>
            <person name="Olson M.V."/>
            <person name="Beck S."/>
            <person name="Rogers J."/>
            <person name="Bentley D.R."/>
        </authorList>
    </citation>
    <scope>NUCLEOTIDE SEQUENCE [LARGE SCALE GENOMIC DNA]</scope>
</reference>
<reference key="4">
    <citation type="journal article" date="2004" name="J. Biol. Chem.">
        <title>Interactions between the cartilage oligomeric matrix protein and matrilins. Implications for matrix assembly and the pathogenesis of chondrodysplasias.</title>
        <authorList>
            <person name="Mann H.H."/>
            <person name="Oezbek S."/>
            <person name="Engel J."/>
            <person name="Paulsson M."/>
            <person name="Wagener R."/>
        </authorList>
    </citation>
    <scope>INTERACTION WITH COMP</scope>
</reference>
<reference key="5">
    <citation type="journal article" date="2010" name="J. Biol. Chem.">
        <title>Structural and functional investigations of Matrilin-1 A-domains reveal insights into their role in cartilage ECM assembly.</title>
        <authorList>
            <person name="Fresquet M."/>
            <person name="Jowitt T.A."/>
            <person name="Stephen L.A."/>
            <person name="Yloestalo J."/>
            <person name="Briggs M.D."/>
        </authorList>
    </citation>
    <scope>INTERACTION WITH TYPE 2 AND TYPE 6 COLLAGENS</scope>
    <scope>GLYCOSYLATION AT ASN-76 AND ASN-344</scope>
    <scope>MUTAGENESIS OF ASN-76 AND ASN-344</scope>
</reference>
<keyword id="KW-0175">Coiled coil</keyword>
<keyword id="KW-1015">Disulfide bond</keyword>
<keyword id="KW-0245">EGF-like domain</keyword>
<keyword id="KW-0272">Extracellular matrix</keyword>
<keyword id="KW-0325">Glycoprotein</keyword>
<keyword id="KW-1267">Proteomics identification</keyword>
<keyword id="KW-1185">Reference proteome</keyword>
<keyword id="KW-0677">Repeat</keyword>
<keyword id="KW-0964">Secreted</keyword>
<keyword id="KW-0732">Signal</keyword>
<evidence type="ECO:0000250" key="1">
    <source>
        <dbReference type="UniProtKB" id="E1BMV3"/>
    </source>
</evidence>
<evidence type="ECO:0000250" key="2">
    <source>
        <dbReference type="UniProtKB" id="P05099"/>
    </source>
</evidence>
<evidence type="ECO:0000250" key="3">
    <source>
        <dbReference type="UniProtKB" id="P51942"/>
    </source>
</evidence>
<evidence type="ECO:0000255" key="4"/>
<evidence type="ECO:0000255" key="5">
    <source>
        <dbReference type="PROSITE-ProRule" id="PRU00076"/>
    </source>
</evidence>
<evidence type="ECO:0000255" key="6">
    <source>
        <dbReference type="PROSITE-ProRule" id="PRU00219"/>
    </source>
</evidence>
<evidence type="ECO:0000269" key="7">
    <source>
    </source>
</evidence>
<evidence type="ECO:0000269" key="8">
    <source>
    </source>
</evidence>
<evidence type="ECO:0000303" key="9">
    <source>
    </source>
</evidence>
<evidence type="ECO:0000305" key="10"/>
<evidence type="ECO:0000312" key="11">
    <source>
        <dbReference type="HGNC" id="HGNC:6907"/>
    </source>
</evidence>
<name>MATN1_HUMAN</name>
<protein>
    <recommendedName>
        <fullName evidence="11">Matrilin-1</fullName>
    </recommendedName>
    <alternativeName>
        <fullName evidence="9">Cartilage matrix protein</fullName>
    </alternativeName>
</protein>
<dbReference type="EMBL" id="M55682">
    <property type="protein sequence ID" value="AAB38702.1"/>
    <property type="molecule type" value="Genomic_DNA"/>
</dbReference>
<dbReference type="EMBL" id="M55675">
    <property type="protein sequence ID" value="AAB38702.1"/>
    <property type="status" value="JOINED"/>
    <property type="molecule type" value="Genomic_DNA"/>
</dbReference>
<dbReference type="EMBL" id="M55676">
    <property type="protein sequence ID" value="AAB38702.1"/>
    <property type="status" value="JOINED"/>
    <property type="molecule type" value="Genomic_DNA"/>
</dbReference>
<dbReference type="EMBL" id="M55677">
    <property type="protein sequence ID" value="AAB38702.1"/>
    <property type="status" value="JOINED"/>
    <property type="molecule type" value="Genomic_DNA"/>
</dbReference>
<dbReference type="EMBL" id="M55679">
    <property type="protein sequence ID" value="AAB38702.1"/>
    <property type="status" value="JOINED"/>
    <property type="molecule type" value="Genomic_DNA"/>
</dbReference>
<dbReference type="EMBL" id="M55680">
    <property type="protein sequence ID" value="AAB38702.1"/>
    <property type="status" value="JOINED"/>
    <property type="molecule type" value="Genomic_DNA"/>
</dbReference>
<dbReference type="EMBL" id="M55681">
    <property type="protein sequence ID" value="AAB38702.1"/>
    <property type="status" value="JOINED"/>
    <property type="molecule type" value="Genomic_DNA"/>
</dbReference>
<dbReference type="EMBL" id="M55683">
    <property type="protein sequence ID" value="AAA63904.1"/>
    <property type="molecule type" value="mRNA"/>
</dbReference>
<dbReference type="EMBL" id="AK312949">
    <property type="protein sequence ID" value="BAG35790.1"/>
    <property type="molecule type" value="mRNA"/>
</dbReference>
<dbReference type="EMBL" id="AL137857">
    <property type="status" value="NOT_ANNOTATED_CDS"/>
    <property type="molecule type" value="Genomic_DNA"/>
</dbReference>
<dbReference type="CCDS" id="CCDS336.1"/>
<dbReference type="PIR" id="A37979">
    <property type="entry name" value="A37979"/>
</dbReference>
<dbReference type="RefSeq" id="NP_002370.1">
    <property type="nucleotide sequence ID" value="NM_002379.3"/>
</dbReference>
<dbReference type="SMR" id="P21941"/>
<dbReference type="BioGRID" id="110316">
    <property type="interactions" value="14"/>
</dbReference>
<dbReference type="ComplexPortal" id="CPX-4423">
    <property type="entry name" value="Matrilin-1 complex"/>
</dbReference>
<dbReference type="ComplexPortal" id="CPX-4503">
    <property type="entry name" value="Matrilin-1 - Matrilin-3 complex"/>
</dbReference>
<dbReference type="FunCoup" id="P21941">
    <property type="interactions" value="95"/>
</dbReference>
<dbReference type="IntAct" id="P21941">
    <property type="interactions" value="7"/>
</dbReference>
<dbReference type="STRING" id="9606.ENSP00000362870"/>
<dbReference type="GlyCosmos" id="P21941">
    <property type="glycosylation" value="1 site, No reported glycans"/>
</dbReference>
<dbReference type="GlyGen" id="P21941">
    <property type="glycosylation" value="1 site"/>
</dbReference>
<dbReference type="iPTMnet" id="P21941"/>
<dbReference type="PhosphoSitePlus" id="P21941"/>
<dbReference type="BioMuta" id="MATN1"/>
<dbReference type="DMDM" id="115556"/>
<dbReference type="MassIVE" id="P21941"/>
<dbReference type="PaxDb" id="9606-ENSP00000362870"/>
<dbReference type="PeptideAtlas" id="P21941"/>
<dbReference type="ProteomicsDB" id="53943"/>
<dbReference type="Antibodypedia" id="31055">
    <property type="antibodies" value="219 antibodies from 31 providers"/>
</dbReference>
<dbReference type="DNASU" id="4146"/>
<dbReference type="Ensembl" id="ENST00000373765.5">
    <property type="protein sequence ID" value="ENSP00000362870.4"/>
    <property type="gene ID" value="ENSG00000162510.6"/>
</dbReference>
<dbReference type="GeneID" id="4146"/>
<dbReference type="KEGG" id="hsa:4146"/>
<dbReference type="MANE-Select" id="ENST00000373765.5">
    <property type="protein sequence ID" value="ENSP00000362870.4"/>
    <property type="RefSeq nucleotide sequence ID" value="NM_002379.3"/>
    <property type="RefSeq protein sequence ID" value="NP_002370.1"/>
</dbReference>
<dbReference type="UCSC" id="uc001brz.4">
    <property type="organism name" value="human"/>
</dbReference>
<dbReference type="AGR" id="HGNC:6907"/>
<dbReference type="CTD" id="4146"/>
<dbReference type="DisGeNET" id="4146"/>
<dbReference type="GeneCards" id="MATN1"/>
<dbReference type="HGNC" id="HGNC:6907">
    <property type="gene designation" value="MATN1"/>
</dbReference>
<dbReference type="HPA" id="ENSG00000162510">
    <property type="expression patterns" value="Tissue enriched (retina)"/>
</dbReference>
<dbReference type="MIM" id="115437">
    <property type="type" value="gene"/>
</dbReference>
<dbReference type="neXtProt" id="NX_P21941"/>
<dbReference type="OpenTargets" id="ENSG00000162510"/>
<dbReference type="PharmGKB" id="PA30650"/>
<dbReference type="VEuPathDB" id="HostDB:ENSG00000162510"/>
<dbReference type="eggNOG" id="KOG1217">
    <property type="taxonomic scope" value="Eukaryota"/>
</dbReference>
<dbReference type="GeneTree" id="ENSGT00940000159638"/>
<dbReference type="HOGENOM" id="CLU_008905_7_0_1"/>
<dbReference type="InParanoid" id="P21941"/>
<dbReference type="OMA" id="FPLRAHS"/>
<dbReference type="OrthoDB" id="6022609at2759"/>
<dbReference type="PAN-GO" id="P21941">
    <property type="GO annotations" value="1 GO annotation based on evolutionary models"/>
</dbReference>
<dbReference type="PhylomeDB" id="P21941"/>
<dbReference type="TreeFam" id="TF330078"/>
<dbReference type="PathwayCommons" id="P21941"/>
<dbReference type="Reactome" id="R-HSA-3000178">
    <property type="pathway name" value="ECM proteoglycans"/>
</dbReference>
<dbReference type="SignaLink" id="P21941"/>
<dbReference type="BioGRID-ORCS" id="4146">
    <property type="hits" value="13 hits in 1142 CRISPR screens"/>
</dbReference>
<dbReference type="GeneWiki" id="MATN1"/>
<dbReference type="GenomeRNAi" id="4146"/>
<dbReference type="Pharos" id="P21941">
    <property type="development level" value="Tbio"/>
</dbReference>
<dbReference type="PRO" id="PR:P21941"/>
<dbReference type="Proteomes" id="UP000005640">
    <property type="component" value="Chromosome 1"/>
</dbReference>
<dbReference type="RNAct" id="P21941">
    <property type="molecule type" value="protein"/>
</dbReference>
<dbReference type="Bgee" id="ENSG00000162510">
    <property type="expression patterns" value="Expressed in cartilage tissue and 122 other cell types or tissues"/>
</dbReference>
<dbReference type="GO" id="GO:0062023">
    <property type="term" value="C:collagen-containing extracellular matrix"/>
    <property type="evidence" value="ECO:0000318"/>
    <property type="project" value="GO_Central"/>
</dbReference>
<dbReference type="GO" id="GO:0031012">
    <property type="term" value="C:extracellular matrix"/>
    <property type="evidence" value="ECO:0000304"/>
    <property type="project" value="ProtInc"/>
</dbReference>
<dbReference type="GO" id="GO:0005576">
    <property type="term" value="C:extracellular region"/>
    <property type="evidence" value="ECO:0000304"/>
    <property type="project" value="Reactome"/>
</dbReference>
<dbReference type="GO" id="GO:0120216">
    <property type="term" value="C:matrilin complex"/>
    <property type="evidence" value="ECO:0000266"/>
    <property type="project" value="ComplexPortal"/>
</dbReference>
<dbReference type="GO" id="GO:0005509">
    <property type="term" value="F:calcium ion binding"/>
    <property type="evidence" value="ECO:0007669"/>
    <property type="project" value="InterPro"/>
</dbReference>
<dbReference type="GO" id="GO:0005201">
    <property type="term" value="F:extracellular matrix structural constituent"/>
    <property type="evidence" value="ECO:0000304"/>
    <property type="project" value="ProtInc"/>
</dbReference>
<dbReference type="GO" id="GO:0030198">
    <property type="term" value="P:extracellular matrix organization"/>
    <property type="evidence" value="ECO:0000303"/>
    <property type="project" value="ComplexPortal"/>
</dbReference>
<dbReference type="GO" id="GO:0003429">
    <property type="term" value="P:growth plate cartilage chondrocyte morphogenesis"/>
    <property type="evidence" value="ECO:0007669"/>
    <property type="project" value="Ensembl"/>
</dbReference>
<dbReference type="GO" id="GO:0065003">
    <property type="term" value="P:protein-containing complex assembly"/>
    <property type="evidence" value="ECO:0000304"/>
    <property type="project" value="ProtInc"/>
</dbReference>
<dbReference type="GO" id="GO:0030500">
    <property type="term" value="P:regulation of bone mineralization"/>
    <property type="evidence" value="ECO:0007669"/>
    <property type="project" value="Ensembl"/>
</dbReference>
<dbReference type="CDD" id="cd01475">
    <property type="entry name" value="vWA_Matrilin"/>
    <property type="match status" value="2"/>
</dbReference>
<dbReference type="FunFam" id="1.20.5.30:FF:000003">
    <property type="entry name" value="cartilage matrix protein-like"/>
    <property type="match status" value="1"/>
</dbReference>
<dbReference type="FunFam" id="2.10.25.10:FF:000600">
    <property type="entry name" value="cartilage matrix protein-like"/>
    <property type="match status" value="1"/>
</dbReference>
<dbReference type="FunFam" id="3.40.50.410:FF:000004">
    <property type="entry name" value="collagen alpha-6(VI) chain"/>
    <property type="match status" value="1"/>
</dbReference>
<dbReference type="FunFam" id="3.40.50.410:FF:000018">
    <property type="entry name" value="Matrilin 1"/>
    <property type="match status" value="1"/>
</dbReference>
<dbReference type="Gene3D" id="1.20.5.30">
    <property type="match status" value="1"/>
</dbReference>
<dbReference type="Gene3D" id="2.10.25.10">
    <property type="entry name" value="Laminin"/>
    <property type="match status" value="1"/>
</dbReference>
<dbReference type="Gene3D" id="3.40.50.410">
    <property type="entry name" value="von Willebrand factor, type A domain"/>
    <property type="match status" value="2"/>
</dbReference>
<dbReference type="InterPro" id="IPR050525">
    <property type="entry name" value="ECM_Assembly_Org"/>
</dbReference>
<dbReference type="InterPro" id="IPR001881">
    <property type="entry name" value="EGF-like_Ca-bd_dom"/>
</dbReference>
<dbReference type="InterPro" id="IPR000742">
    <property type="entry name" value="EGF-like_dom"/>
</dbReference>
<dbReference type="InterPro" id="IPR036337">
    <property type="entry name" value="Matrilin_cc_sf"/>
</dbReference>
<dbReference type="InterPro" id="IPR019466">
    <property type="entry name" value="Matrilin_coiled-coil_trimer"/>
</dbReference>
<dbReference type="InterPro" id="IPR002035">
    <property type="entry name" value="VWF_A"/>
</dbReference>
<dbReference type="InterPro" id="IPR036465">
    <property type="entry name" value="vWFA_dom_sf"/>
</dbReference>
<dbReference type="PANTHER" id="PTHR24020:SF16">
    <property type="entry name" value="CARTILAGE MATRIX PROTEIN"/>
    <property type="match status" value="1"/>
</dbReference>
<dbReference type="PANTHER" id="PTHR24020">
    <property type="entry name" value="COLLAGEN ALPHA"/>
    <property type="match status" value="1"/>
</dbReference>
<dbReference type="Pfam" id="PF14670">
    <property type="entry name" value="FXa_inhibition"/>
    <property type="match status" value="1"/>
</dbReference>
<dbReference type="Pfam" id="PF10393">
    <property type="entry name" value="Matrilin_ccoil"/>
    <property type="match status" value="1"/>
</dbReference>
<dbReference type="Pfam" id="PF00092">
    <property type="entry name" value="VWA"/>
    <property type="match status" value="2"/>
</dbReference>
<dbReference type="PRINTS" id="PR00453">
    <property type="entry name" value="VWFADOMAIN"/>
</dbReference>
<dbReference type="SMART" id="SM00181">
    <property type="entry name" value="EGF"/>
    <property type="match status" value="1"/>
</dbReference>
<dbReference type="SMART" id="SM00179">
    <property type="entry name" value="EGF_CA"/>
    <property type="match status" value="1"/>
</dbReference>
<dbReference type="SMART" id="SM01279">
    <property type="entry name" value="Matrilin_ccoil"/>
    <property type="match status" value="1"/>
</dbReference>
<dbReference type="SMART" id="SM00327">
    <property type="entry name" value="VWA"/>
    <property type="match status" value="2"/>
</dbReference>
<dbReference type="SUPFAM" id="SSF58002">
    <property type="entry name" value="Chicken cartilage matrix protein"/>
    <property type="match status" value="1"/>
</dbReference>
<dbReference type="SUPFAM" id="SSF53300">
    <property type="entry name" value="vWA-like"/>
    <property type="match status" value="2"/>
</dbReference>
<dbReference type="PROSITE" id="PS01186">
    <property type="entry name" value="EGF_2"/>
    <property type="match status" value="1"/>
</dbReference>
<dbReference type="PROSITE" id="PS50234">
    <property type="entry name" value="VWFA"/>
    <property type="match status" value="2"/>
</dbReference>
<gene>
    <name evidence="11" type="primary">MATN1</name>
    <name evidence="9" type="synonym">CMP</name>
    <name evidence="3" type="synonym">CRTM</name>
</gene>
<proteinExistence type="evidence at protein level"/>